<accession>Q7MTP0</accession>
<evidence type="ECO:0000255" key="1">
    <source>
        <dbReference type="HAMAP-Rule" id="MF_00059"/>
    </source>
</evidence>
<evidence type="ECO:0007829" key="2">
    <source>
        <dbReference type="PDB" id="8DKC"/>
    </source>
</evidence>
<proteinExistence type="evidence at protein level"/>
<protein>
    <recommendedName>
        <fullName evidence="1">DNA-directed RNA polymerase subunit alpha</fullName>
        <shortName evidence="1">RNAP subunit alpha</shortName>
        <ecNumber evidence="1">2.7.7.6</ecNumber>
    </recommendedName>
    <alternativeName>
        <fullName evidence="1">RNA polymerase subunit alpha</fullName>
    </alternativeName>
    <alternativeName>
        <fullName evidence="1">Transcriptase subunit alpha</fullName>
    </alternativeName>
</protein>
<comment type="function">
    <text evidence="1">DNA-dependent RNA polymerase catalyzes the transcription of DNA into RNA using the four ribonucleoside triphosphates as substrates.</text>
</comment>
<comment type="catalytic activity">
    <reaction evidence="1">
        <text>RNA(n) + a ribonucleoside 5'-triphosphate = RNA(n+1) + diphosphate</text>
        <dbReference type="Rhea" id="RHEA:21248"/>
        <dbReference type="Rhea" id="RHEA-COMP:14527"/>
        <dbReference type="Rhea" id="RHEA-COMP:17342"/>
        <dbReference type="ChEBI" id="CHEBI:33019"/>
        <dbReference type="ChEBI" id="CHEBI:61557"/>
        <dbReference type="ChEBI" id="CHEBI:140395"/>
        <dbReference type="EC" id="2.7.7.6"/>
    </reaction>
</comment>
<comment type="subunit">
    <text evidence="1">Homodimer. The RNAP catalytic core consists of 2 alpha, 1 beta, 1 beta' and 1 omega subunit. When a sigma factor is associated with the core the holoenzyme is formed, which can initiate transcription.</text>
</comment>
<comment type="domain">
    <text evidence="1">The N-terminal domain is essential for RNAP assembly and basal transcription, whereas the C-terminal domain is involved in interaction with transcriptional regulators and with upstream promoter elements.</text>
</comment>
<comment type="similarity">
    <text evidence="1">Belongs to the RNA polymerase alpha chain family.</text>
</comment>
<name>RPOA_PORGI</name>
<feature type="chain" id="PRO_0000175354" description="DNA-directed RNA polymerase subunit alpha">
    <location>
        <begin position="1"/>
        <end position="330"/>
    </location>
</feature>
<feature type="region of interest" description="Alpha N-terminal domain (alpha-NTD)" evidence="1">
    <location>
        <begin position="1"/>
        <end position="232"/>
    </location>
</feature>
<feature type="region of interest" description="Alpha C-terminal domain (alpha-CTD)" evidence="1">
    <location>
        <begin position="248"/>
        <end position="330"/>
    </location>
</feature>
<feature type="strand" evidence="2">
    <location>
        <begin position="11"/>
        <end position="14"/>
    </location>
</feature>
<feature type="strand" evidence="2">
    <location>
        <begin position="17"/>
        <end position="27"/>
    </location>
</feature>
<feature type="helix" evidence="2">
    <location>
        <begin position="34"/>
        <end position="47"/>
    </location>
</feature>
<feature type="strand" evidence="2">
    <location>
        <begin position="50"/>
        <end position="57"/>
    </location>
</feature>
<feature type="strand" evidence="2">
    <location>
        <begin position="72"/>
        <end position="74"/>
    </location>
</feature>
<feature type="helix" evidence="2">
    <location>
        <begin position="76"/>
        <end position="83"/>
    </location>
</feature>
<feature type="strand" evidence="2">
    <location>
        <begin position="88"/>
        <end position="92"/>
    </location>
</feature>
<feature type="strand" evidence="2">
    <location>
        <begin position="97"/>
        <end position="104"/>
    </location>
</feature>
<feature type="strand" evidence="2">
    <location>
        <begin position="109"/>
        <end position="112"/>
    </location>
</feature>
<feature type="strand" evidence="2">
    <location>
        <begin position="122"/>
        <end position="125"/>
    </location>
</feature>
<feature type="strand" evidence="2">
    <location>
        <begin position="130"/>
        <end position="134"/>
    </location>
</feature>
<feature type="strand" evidence="2">
    <location>
        <begin position="140"/>
        <end position="153"/>
    </location>
</feature>
<feature type="helix" evidence="2">
    <location>
        <begin position="156"/>
        <end position="160"/>
    </location>
</feature>
<feature type="turn" evidence="2">
    <location>
        <begin position="164"/>
        <end position="166"/>
    </location>
</feature>
<feature type="strand" evidence="2">
    <location>
        <begin position="177"/>
        <end position="189"/>
    </location>
</feature>
<feature type="strand" evidence="2">
    <location>
        <begin position="192"/>
        <end position="204"/>
    </location>
</feature>
<feature type="strand" evidence="2">
    <location>
        <begin position="206"/>
        <end position="208"/>
    </location>
</feature>
<feature type="helix" evidence="2">
    <location>
        <begin position="210"/>
        <end position="229"/>
    </location>
</feature>
<sequence length="330" mass="36798">MAILAFQKPENVLMMETSDSIAKFEFKPLEPGYGITIGNALRRILLSSLEGFAITAIKIEGVEHEFATIPGVLEDVTNIILNLKQVRFKQIVPNADVEKATIVISNSEVFRAGDLNAQLSNFEVLNSNLVICHLDKSATLTMEFSINKGRGYVSAEENRAEHNELSTIAIDSIYTPIRNVKYAVENFRVEQKTDYEKLLMEVTTDGSIRPVDALREAAQILISHFSLFAENKIAIEYVDIVDTDEFDEDSLHMRQLLKSKLSGLDLSVRALNCLNAAGVDTLGDLVSLSRSDLMKIRNFGKKSLTELDELLATLNLSFGMDISKYKLDKD</sequence>
<organism>
    <name type="scientific">Porphyromonas gingivalis (strain ATCC BAA-308 / W83)</name>
    <dbReference type="NCBI Taxonomy" id="242619"/>
    <lineage>
        <taxon>Bacteria</taxon>
        <taxon>Pseudomonadati</taxon>
        <taxon>Bacteroidota</taxon>
        <taxon>Bacteroidia</taxon>
        <taxon>Bacteroidales</taxon>
        <taxon>Porphyromonadaceae</taxon>
        <taxon>Porphyromonas</taxon>
    </lineage>
</organism>
<gene>
    <name evidence="1" type="primary">rpoA</name>
    <name type="ordered locus">PG_1911</name>
</gene>
<reference key="1">
    <citation type="journal article" date="2003" name="J. Bacteriol.">
        <title>Complete genome sequence of the oral pathogenic bacterium Porphyromonas gingivalis strain W83.</title>
        <authorList>
            <person name="Nelson K.E."/>
            <person name="Fleischmann R.D."/>
            <person name="DeBoy R.T."/>
            <person name="Paulsen I.T."/>
            <person name="Fouts D.E."/>
            <person name="Eisen J.A."/>
            <person name="Daugherty S.C."/>
            <person name="Dodson R.J."/>
            <person name="Durkin A.S."/>
            <person name="Gwinn M.L."/>
            <person name="Haft D.H."/>
            <person name="Kolonay J.F."/>
            <person name="Nelson W.C."/>
            <person name="Mason T.M."/>
            <person name="Tallon L."/>
            <person name="Gray J."/>
            <person name="Granger D."/>
            <person name="Tettelin H."/>
            <person name="Dong H."/>
            <person name="Galvin J.L."/>
            <person name="Duncan M.J."/>
            <person name="Dewhirst F.E."/>
            <person name="Fraser C.M."/>
        </authorList>
    </citation>
    <scope>NUCLEOTIDE SEQUENCE [LARGE SCALE GENOMIC DNA]</scope>
    <source>
        <strain>ATCC BAA-308 / W83</strain>
    </source>
</reference>
<dbReference type="EC" id="2.7.7.6" evidence="1"/>
<dbReference type="EMBL" id="AE015924">
    <property type="protein sequence ID" value="AAQ66892.1"/>
    <property type="molecule type" value="Genomic_DNA"/>
</dbReference>
<dbReference type="RefSeq" id="WP_004583572.1">
    <property type="nucleotide sequence ID" value="NC_002950.2"/>
</dbReference>
<dbReference type="PDB" id="8DKC">
    <property type="method" value="EM"/>
    <property type="resolution" value="3.50 A"/>
    <property type="chains" value="A/B=1-330"/>
</dbReference>
<dbReference type="PDBsum" id="8DKC"/>
<dbReference type="EMDB" id="EMD-27487"/>
<dbReference type="SMR" id="Q7MTP0"/>
<dbReference type="STRING" id="242619.PG_1911"/>
<dbReference type="EnsemblBacteria" id="AAQ66892">
    <property type="protein sequence ID" value="AAQ66892"/>
    <property type="gene ID" value="PG_1911"/>
</dbReference>
<dbReference type="GeneID" id="29256993"/>
<dbReference type="KEGG" id="pgi:PG_1911"/>
<dbReference type="eggNOG" id="COG0202">
    <property type="taxonomic scope" value="Bacteria"/>
</dbReference>
<dbReference type="HOGENOM" id="CLU_053084_0_1_10"/>
<dbReference type="Proteomes" id="UP000000588">
    <property type="component" value="Chromosome"/>
</dbReference>
<dbReference type="GO" id="GO:0005737">
    <property type="term" value="C:cytoplasm"/>
    <property type="evidence" value="ECO:0007669"/>
    <property type="project" value="UniProtKB-ARBA"/>
</dbReference>
<dbReference type="GO" id="GO:0000428">
    <property type="term" value="C:DNA-directed RNA polymerase complex"/>
    <property type="evidence" value="ECO:0007669"/>
    <property type="project" value="UniProtKB-KW"/>
</dbReference>
<dbReference type="GO" id="GO:0003677">
    <property type="term" value="F:DNA binding"/>
    <property type="evidence" value="ECO:0007669"/>
    <property type="project" value="UniProtKB-UniRule"/>
</dbReference>
<dbReference type="GO" id="GO:0003899">
    <property type="term" value="F:DNA-directed RNA polymerase activity"/>
    <property type="evidence" value="ECO:0007669"/>
    <property type="project" value="UniProtKB-UniRule"/>
</dbReference>
<dbReference type="GO" id="GO:0046983">
    <property type="term" value="F:protein dimerization activity"/>
    <property type="evidence" value="ECO:0007669"/>
    <property type="project" value="InterPro"/>
</dbReference>
<dbReference type="GO" id="GO:0006351">
    <property type="term" value="P:DNA-templated transcription"/>
    <property type="evidence" value="ECO:0007669"/>
    <property type="project" value="UniProtKB-UniRule"/>
</dbReference>
<dbReference type="CDD" id="cd06928">
    <property type="entry name" value="RNAP_alpha_NTD"/>
    <property type="match status" value="1"/>
</dbReference>
<dbReference type="FunFam" id="2.170.120.12:FF:000001">
    <property type="entry name" value="DNA-directed RNA polymerase subunit alpha"/>
    <property type="match status" value="1"/>
</dbReference>
<dbReference type="Gene3D" id="1.10.150.20">
    <property type="entry name" value="5' to 3' exonuclease, C-terminal subdomain"/>
    <property type="match status" value="1"/>
</dbReference>
<dbReference type="Gene3D" id="2.170.120.12">
    <property type="entry name" value="DNA-directed RNA polymerase, insert domain"/>
    <property type="match status" value="1"/>
</dbReference>
<dbReference type="Gene3D" id="3.30.1360.10">
    <property type="entry name" value="RNA polymerase, RBP11-like subunit"/>
    <property type="match status" value="1"/>
</dbReference>
<dbReference type="HAMAP" id="MF_00059">
    <property type="entry name" value="RNApol_bact_RpoA"/>
    <property type="match status" value="1"/>
</dbReference>
<dbReference type="InterPro" id="IPR011262">
    <property type="entry name" value="DNA-dir_RNA_pol_insert"/>
</dbReference>
<dbReference type="InterPro" id="IPR011263">
    <property type="entry name" value="DNA-dir_RNA_pol_RpoA/D/Rpb3"/>
</dbReference>
<dbReference type="InterPro" id="IPR011773">
    <property type="entry name" value="DNA-dir_RpoA"/>
</dbReference>
<dbReference type="InterPro" id="IPR036603">
    <property type="entry name" value="RBP11-like"/>
</dbReference>
<dbReference type="InterPro" id="IPR011260">
    <property type="entry name" value="RNAP_asu_C"/>
</dbReference>
<dbReference type="InterPro" id="IPR036643">
    <property type="entry name" value="RNApol_insert_sf"/>
</dbReference>
<dbReference type="NCBIfam" id="NF003513">
    <property type="entry name" value="PRK05182.1-2"/>
    <property type="match status" value="1"/>
</dbReference>
<dbReference type="NCBIfam" id="NF003516">
    <property type="entry name" value="PRK05182.2-2"/>
    <property type="match status" value="1"/>
</dbReference>
<dbReference type="NCBIfam" id="NF003519">
    <property type="entry name" value="PRK05182.2-5"/>
    <property type="match status" value="1"/>
</dbReference>
<dbReference type="NCBIfam" id="TIGR02027">
    <property type="entry name" value="rpoA"/>
    <property type="match status" value="1"/>
</dbReference>
<dbReference type="Pfam" id="PF01000">
    <property type="entry name" value="RNA_pol_A_bac"/>
    <property type="match status" value="1"/>
</dbReference>
<dbReference type="Pfam" id="PF03118">
    <property type="entry name" value="RNA_pol_A_CTD"/>
    <property type="match status" value="1"/>
</dbReference>
<dbReference type="Pfam" id="PF01193">
    <property type="entry name" value="RNA_pol_L"/>
    <property type="match status" value="1"/>
</dbReference>
<dbReference type="SMART" id="SM00662">
    <property type="entry name" value="RPOLD"/>
    <property type="match status" value="1"/>
</dbReference>
<dbReference type="SUPFAM" id="SSF47789">
    <property type="entry name" value="C-terminal domain of RNA polymerase alpha subunit"/>
    <property type="match status" value="1"/>
</dbReference>
<dbReference type="SUPFAM" id="SSF56553">
    <property type="entry name" value="Insert subdomain of RNA polymerase alpha subunit"/>
    <property type="match status" value="1"/>
</dbReference>
<dbReference type="SUPFAM" id="SSF55257">
    <property type="entry name" value="RBP11-like subunits of RNA polymerase"/>
    <property type="match status" value="1"/>
</dbReference>
<keyword id="KW-0002">3D-structure</keyword>
<keyword id="KW-0240">DNA-directed RNA polymerase</keyword>
<keyword id="KW-0548">Nucleotidyltransferase</keyword>
<keyword id="KW-1185">Reference proteome</keyword>
<keyword id="KW-0804">Transcription</keyword>
<keyword id="KW-0808">Transferase</keyword>